<gene>
    <name type="primary">rps27</name>
    <name type="ORF">SPBC1685.10</name>
</gene>
<reference key="1">
    <citation type="journal article" date="2002" name="Nature">
        <title>The genome sequence of Schizosaccharomyces pombe.</title>
        <authorList>
            <person name="Wood V."/>
            <person name="Gwilliam R."/>
            <person name="Rajandream M.A."/>
            <person name="Lyne M.H."/>
            <person name="Lyne R."/>
            <person name="Stewart A."/>
            <person name="Sgouros J.G."/>
            <person name="Peat N."/>
            <person name="Hayles J."/>
            <person name="Baker S.G."/>
            <person name="Basham D."/>
            <person name="Bowman S."/>
            <person name="Brooks K."/>
            <person name="Brown D."/>
            <person name="Brown S."/>
            <person name="Chillingworth T."/>
            <person name="Churcher C.M."/>
            <person name="Collins M."/>
            <person name="Connor R."/>
            <person name="Cronin A."/>
            <person name="Davis P."/>
            <person name="Feltwell T."/>
            <person name="Fraser A."/>
            <person name="Gentles S."/>
            <person name="Goble A."/>
            <person name="Hamlin N."/>
            <person name="Harris D.E."/>
            <person name="Hidalgo J."/>
            <person name="Hodgson G."/>
            <person name="Holroyd S."/>
            <person name="Hornsby T."/>
            <person name="Howarth S."/>
            <person name="Huckle E.J."/>
            <person name="Hunt S."/>
            <person name="Jagels K."/>
            <person name="James K.D."/>
            <person name="Jones L."/>
            <person name="Jones M."/>
            <person name="Leather S."/>
            <person name="McDonald S."/>
            <person name="McLean J."/>
            <person name="Mooney P."/>
            <person name="Moule S."/>
            <person name="Mungall K.L."/>
            <person name="Murphy L.D."/>
            <person name="Niblett D."/>
            <person name="Odell C."/>
            <person name="Oliver K."/>
            <person name="O'Neil S."/>
            <person name="Pearson D."/>
            <person name="Quail M.A."/>
            <person name="Rabbinowitsch E."/>
            <person name="Rutherford K.M."/>
            <person name="Rutter S."/>
            <person name="Saunders D."/>
            <person name="Seeger K."/>
            <person name="Sharp S."/>
            <person name="Skelton J."/>
            <person name="Simmonds M.N."/>
            <person name="Squares R."/>
            <person name="Squares S."/>
            <person name="Stevens K."/>
            <person name="Taylor K."/>
            <person name="Taylor R.G."/>
            <person name="Tivey A."/>
            <person name="Walsh S.V."/>
            <person name="Warren T."/>
            <person name="Whitehead S."/>
            <person name="Woodward J.R."/>
            <person name="Volckaert G."/>
            <person name="Aert R."/>
            <person name="Robben J."/>
            <person name="Grymonprez B."/>
            <person name="Weltjens I."/>
            <person name="Vanstreels E."/>
            <person name="Rieger M."/>
            <person name="Schaefer M."/>
            <person name="Mueller-Auer S."/>
            <person name="Gabel C."/>
            <person name="Fuchs M."/>
            <person name="Duesterhoeft A."/>
            <person name="Fritzc C."/>
            <person name="Holzer E."/>
            <person name="Moestl D."/>
            <person name="Hilbert H."/>
            <person name="Borzym K."/>
            <person name="Langer I."/>
            <person name="Beck A."/>
            <person name="Lehrach H."/>
            <person name="Reinhardt R."/>
            <person name="Pohl T.M."/>
            <person name="Eger P."/>
            <person name="Zimmermann W."/>
            <person name="Wedler H."/>
            <person name="Wambutt R."/>
            <person name="Purnelle B."/>
            <person name="Goffeau A."/>
            <person name="Cadieu E."/>
            <person name="Dreano S."/>
            <person name="Gloux S."/>
            <person name="Lelaure V."/>
            <person name="Mottier S."/>
            <person name="Galibert F."/>
            <person name="Aves S.J."/>
            <person name="Xiang Z."/>
            <person name="Hunt C."/>
            <person name="Moore K."/>
            <person name="Hurst S.M."/>
            <person name="Lucas M."/>
            <person name="Rochet M."/>
            <person name="Gaillardin C."/>
            <person name="Tallada V.A."/>
            <person name="Garzon A."/>
            <person name="Thode G."/>
            <person name="Daga R.R."/>
            <person name="Cruzado L."/>
            <person name="Jimenez J."/>
            <person name="Sanchez M."/>
            <person name="del Rey F."/>
            <person name="Benito J."/>
            <person name="Dominguez A."/>
            <person name="Revuelta J.L."/>
            <person name="Moreno S."/>
            <person name="Armstrong J."/>
            <person name="Forsburg S.L."/>
            <person name="Cerutti L."/>
            <person name="Lowe T."/>
            <person name="McCombie W.R."/>
            <person name="Paulsen I."/>
            <person name="Potashkin J."/>
            <person name="Shpakovski G.V."/>
            <person name="Ussery D."/>
            <person name="Barrell B.G."/>
            <person name="Nurse P."/>
        </authorList>
    </citation>
    <scope>NUCLEOTIDE SEQUENCE [LARGE SCALE GENOMIC DNA]</scope>
    <source>
        <strain>972 / ATCC 24843</strain>
    </source>
</reference>
<reference key="2">
    <citation type="journal article" date="1999" name="Bioorg. Khim.">
        <title>Molecular cloning of some components of the translation apparatus of fission yeast Schizosaccharomyces pombe and a list of its cytoplasmic proteins genes.</title>
        <authorList>
            <person name="Shpakovskii G.V."/>
            <person name="Baranova G.M."/>
            <person name="Wood V."/>
            <person name="Gwilliam R.G."/>
            <person name="Shematorova E.K."/>
            <person name="Korol'chuk O.L."/>
            <person name="Lebedenko E.N."/>
        </authorList>
    </citation>
    <scope>NUCLEOTIDE SEQUENCE [MRNA] OF 4-83</scope>
    <source>
        <strain>972 / ATCC 24843</strain>
    </source>
</reference>
<reference key="3">
    <citation type="submission" date="1998-06" db="EMBL/GenBank/DDBJ databases">
        <title>S.pombe ribosomal protein S27 homolog.</title>
        <authorList>
            <person name="Kawamukai M."/>
        </authorList>
    </citation>
    <scope>NUCLEOTIDE SEQUENCE [MRNA] OF 4-83</scope>
</reference>
<reference key="4">
    <citation type="journal article" date="2006" name="Nat. Biotechnol.">
        <title>ORFeome cloning and global analysis of protein localization in the fission yeast Schizosaccharomyces pombe.</title>
        <authorList>
            <person name="Matsuyama A."/>
            <person name="Arai R."/>
            <person name="Yashiroda Y."/>
            <person name="Shirai A."/>
            <person name="Kamata A."/>
            <person name="Sekido S."/>
            <person name="Kobayashi Y."/>
            <person name="Hashimoto A."/>
            <person name="Hamamoto M."/>
            <person name="Hiraoka Y."/>
            <person name="Horinouchi S."/>
            <person name="Yoshida M."/>
        </authorList>
    </citation>
    <scope>SUBCELLULAR LOCATION [LARGE SCALE ANALYSIS]</scope>
</reference>
<name>RS27_SCHPO</name>
<protein>
    <recommendedName>
        <fullName evidence="4">Small ribosomal subunit protein eS27</fullName>
    </recommendedName>
    <alternativeName>
        <fullName>40S ribosomal protein S27</fullName>
    </alternativeName>
</protein>
<evidence type="ECO:0000250" key="1">
    <source>
        <dbReference type="UniProtKB" id="P35997"/>
    </source>
</evidence>
<evidence type="ECO:0000255" key="2"/>
<evidence type="ECO:0000269" key="3">
    <source>
    </source>
</evidence>
<evidence type="ECO:0000305" key="4"/>
<sequence>MVLAVDLLNPSHESEMRKHKLKQLVQGPRSFFMDVKCPGCFNITTVFSHAQTVVICGSCASVLCQPTGGKARLMEGCSFRRKN</sequence>
<organism>
    <name type="scientific">Schizosaccharomyces pombe (strain 972 / ATCC 24843)</name>
    <name type="common">Fission yeast</name>
    <dbReference type="NCBI Taxonomy" id="284812"/>
    <lineage>
        <taxon>Eukaryota</taxon>
        <taxon>Fungi</taxon>
        <taxon>Dikarya</taxon>
        <taxon>Ascomycota</taxon>
        <taxon>Taphrinomycotina</taxon>
        <taxon>Schizosaccharomycetes</taxon>
        <taxon>Schizosaccharomycetales</taxon>
        <taxon>Schizosaccharomycetaceae</taxon>
        <taxon>Schizosaccharomyces</taxon>
    </lineage>
</organism>
<feature type="chain" id="PRO_0000149065" description="Small ribosomal subunit protein eS27">
    <location>
        <begin position="1"/>
        <end position="83"/>
    </location>
</feature>
<feature type="zinc finger region" description="C4-type" evidence="2">
    <location>
        <begin position="37"/>
        <end position="59"/>
    </location>
</feature>
<feature type="sequence conflict" description="In Ref. 3; BAA28754." evidence="4" ref="3">
    <original>FF</original>
    <variation>LL</variation>
    <location>
        <begin position="31"/>
        <end position="32"/>
    </location>
</feature>
<dbReference type="EMBL" id="CU329671">
    <property type="protein sequence ID" value="CAA20058.1"/>
    <property type="molecule type" value="Genomic_DNA"/>
</dbReference>
<dbReference type="EMBL" id="AF045155">
    <property type="protein sequence ID" value="AAD02390.2"/>
    <property type="molecule type" value="mRNA"/>
</dbReference>
<dbReference type="EMBL" id="AB015171">
    <property type="protein sequence ID" value="BAA28754.1"/>
    <property type="molecule type" value="mRNA"/>
</dbReference>
<dbReference type="PIR" id="T39526">
    <property type="entry name" value="T39526"/>
</dbReference>
<dbReference type="PIR" id="T43368">
    <property type="entry name" value="T43368"/>
</dbReference>
<dbReference type="PIR" id="T43625">
    <property type="entry name" value="T43625"/>
</dbReference>
<dbReference type="RefSeq" id="NP_595214.1">
    <property type="nucleotide sequence ID" value="NM_001021121.2"/>
</dbReference>
<dbReference type="PDB" id="9AXT">
    <property type="method" value="EM"/>
    <property type="resolution" value="2.40 A"/>
    <property type="chains" value="Ah=1-83"/>
</dbReference>
<dbReference type="PDB" id="9AXV">
    <property type="method" value="EM"/>
    <property type="resolution" value="2.40 A"/>
    <property type="chains" value="Ah=1-83"/>
</dbReference>
<dbReference type="PDBsum" id="9AXT"/>
<dbReference type="PDBsum" id="9AXV"/>
<dbReference type="EMDB" id="EMD-43972"/>
<dbReference type="EMDB" id="EMD-43976"/>
<dbReference type="SMR" id="O74330"/>
<dbReference type="BioGRID" id="276513">
    <property type="interactions" value="5"/>
</dbReference>
<dbReference type="FunCoup" id="O74330">
    <property type="interactions" value="360"/>
</dbReference>
<dbReference type="STRING" id="284812.O74330"/>
<dbReference type="iPTMnet" id="O74330"/>
<dbReference type="PaxDb" id="4896-SPBC1685.10.1"/>
<dbReference type="EnsemblFungi" id="SPBC1685.10.1">
    <property type="protein sequence ID" value="SPBC1685.10.1:pep"/>
    <property type="gene ID" value="SPBC1685.10"/>
</dbReference>
<dbReference type="GeneID" id="2539969"/>
<dbReference type="KEGG" id="spo:2539969"/>
<dbReference type="PomBase" id="SPBC1685.10">
    <property type="gene designation" value="rps27"/>
</dbReference>
<dbReference type="VEuPathDB" id="FungiDB:SPBC1685.10"/>
<dbReference type="eggNOG" id="KOG1779">
    <property type="taxonomic scope" value="Eukaryota"/>
</dbReference>
<dbReference type="HOGENOM" id="CLU_130128_3_0_1"/>
<dbReference type="InParanoid" id="O74330"/>
<dbReference type="OMA" id="CASILCQ"/>
<dbReference type="PhylomeDB" id="O74330"/>
<dbReference type="Reactome" id="R-SPO-156827">
    <property type="pathway name" value="L13a-mediated translational silencing of Ceruloplasmin expression"/>
</dbReference>
<dbReference type="Reactome" id="R-SPO-1799339">
    <property type="pathway name" value="SRP-dependent cotranslational protein targeting to membrane"/>
</dbReference>
<dbReference type="Reactome" id="R-SPO-72649">
    <property type="pathway name" value="Translation initiation complex formation"/>
</dbReference>
<dbReference type="Reactome" id="R-SPO-72689">
    <property type="pathway name" value="Formation of a pool of free 40S subunits"/>
</dbReference>
<dbReference type="Reactome" id="R-SPO-72695">
    <property type="pathway name" value="Formation of the ternary complex, and subsequently, the 43S complex"/>
</dbReference>
<dbReference type="Reactome" id="R-SPO-72702">
    <property type="pathway name" value="Ribosomal scanning and start codon recognition"/>
</dbReference>
<dbReference type="Reactome" id="R-SPO-72706">
    <property type="pathway name" value="GTP hydrolysis and joining of the 60S ribosomal subunit"/>
</dbReference>
<dbReference type="Reactome" id="R-SPO-975956">
    <property type="pathway name" value="Nonsense Mediated Decay (NMD) independent of the Exon Junction Complex (EJC)"/>
</dbReference>
<dbReference type="Reactome" id="R-SPO-975957">
    <property type="pathway name" value="Nonsense Mediated Decay (NMD) enhanced by the Exon Junction Complex (EJC)"/>
</dbReference>
<dbReference type="PRO" id="PR:O74330"/>
<dbReference type="Proteomes" id="UP000002485">
    <property type="component" value="Chromosome II"/>
</dbReference>
<dbReference type="GO" id="GO:0005829">
    <property type="term" value="C:cytosol"/>
    <property type="evidence" value="ECO:0007005"/>
    <property type="project" value="PomBase"/>
</dbReference>
<dbReference type="GO" id="GO:0022627">
    <property type="term" value="C:cytosolic small ribosomal subunit"/>
    <property type="evidence" value="ECO:0000269"/>
    <property type="project" value="PomBase"/>
</dbReference>
<dbReference type="GO" id="GO:0003723">
    <property type="term" value="F:RNA binding"/>
    <property type="evidence" value="ECO:0000318"/>
    <property type="project" value="GO_Central"/>
</dbReference>
<dbReference type="GO" id="GO:0003735">
    <property type="term" value="F:structural constituent of ribosome"/>
    <property type="evidence" value="ECO:0000318"/>
    <property type="project" value="GO_Central"/>
</dbReference>
<dbReference type="GO" id="GO:0008270">
    <property type="term" value="F:zinc ion binding"/>
    <property type="evidence" value="ECO:0007669"/>
    <property type="project" value="UniProtKB-KW"/>
</dbReference>
<dbReference type="GO" id="GO:0002181">
    <property type="term" value="P:cytoplasmic translation"/>
    <property type="evidence" value="ECO:0000266"/>
    <property type="project" value="PomBase"/>
</dbReference>
<dbReference type="GO" id="GO:0000028">
    <property type="term" value="P:ribosomal small subunit assembly"/>
    <property type="evidence" value="ECO:0000318"/>
    <property type="project" value="GO_Central"/>
</dbReference>
<dbReference type="FunFam" id="2.20.25.100:FF:000001">
    <property type="entry name" value="40S ribosomal protein S27"/>
    <property type="match status" value="1"/>
</dbReference>
<dbReference type="Gene3D" id="2.20.25.100">
    <property type="entry name" value="Zn-binding ribosomal proteins"/>
    <property type="match status" value="1"/>
</dbReference>
<dbReference type="HAMAP" id="MF_00371">
    <property type="entry name" value="Ribosomal_eS27"/>
    <property type="match status" value="1"/>
</dbReference>
<dbReference type="InterPro" id="IPR000592">
    <property type="entry name" value="Ribosomal_eS27"/>
</dbReference>
<dbReference type="InterPro" id="IPR023407">
    <property type="entry name" value="Ribosomal_eS27_Zn-bd_dom_sf"/>
</dbReference>
<dbReference type="InterPro" id="IPR011332">
    <property type="entry name" value="Ribosomal_zn-bd"/>
</dbReference>
<dbReference type="PANTHER" id="PTHR11594">
    <property type="entry name" value="40S RIBOSOMAL PROTEIN S27"/>
    <property type="match status" value="1"/>
</dbReference>
<dbReference type="Pfam" id="PF01667">
    <property type="entry name" value="Ribosomal_S27e"/>
    <property type="match status" value="1"/>
</dbReference>
<dbReference type="SUPFAM" id="SSF57829">
    <property type="entry name" value="Zn-binding ribosomal proteins"/>
    <property type="match status" value="1"/>
</dbReference>
<dbReference type="PROSITE" id="PS01168">
    <property type="entry name" value="RIBOSOMAL_S27E"/>
    <property type="match status" value="1"/>
</dbReference>
<keyword id="KW-0002">3D-structure</keyword>
<keyword id="KW-0963">Cytoplasm</keyword>
<keyword id="KW-0479">Metal-binding</keyword>
<keyword id="KW-1185">Reference proteome</keyword>
<keyword id="KW-0687">Ribonucleoprotein</keyword>
<keyword id="KW-0689">Ribosomal protein</keyword>
<keyword id="KW-0862">Zinc</keyword>
<keyword id="KW-0863">Zinc-finger</keyword>
<accession>O74330</accession>
<accession>O59867</accession>
<accession>Q9UUL6</accession>
<comment type="function">
    <text evidence="1">Component of the ribosome, a large ribonucleoprotein complex responsible for the synthesis of proteins in the cell. The small ribosomal subunit (SSU) binds messenger RNAs (mRNAs) and translates the encoded message by selecting cognate aminoacyl-transfer RNA (tRNA) molecules. The large subunit (LSU) contains the ribosomal catalytic site termed the peptidyl transferase center (PTC), which catalyzes the formation of peptide bonds, thereby polymerizing the amino acids delivered by tRNAs into a polypeptide chain. The nascent polypeptides leave the ribosome through a tunnel in the LSU and interact with protein factors that function in enzymatic processing, targeting, and the membrane insertion of nascent chains at the exit of the ribosomal tunnel.</text>
</comment>
<comment type="cofactor">
    <cofactor evidence="1">
        <name>Zn(2+)</name>
        <dbReference type="ChEBI" id="CHEBI:29105"/>
    </cofactor>
    <text evidence="1">Binds 1 zinc ion per subunit.</text>
</comment>
<comment type="subunit">
    <text evidence="1">Component of the small ribosomal subunit (SSU). Mature yeast ribosomes consist of a small (40S) and a large (60S) subunit. The 40S small subunit contains 1 molecule of ribosomal RNA (18S rRNA) and at least 33 different proteins. The large 60S subunit contains 3 rRNA molecules (25S, 5.8S and 5S rRNA) and at least 46 different proteins.</text>
</comment>
<comment type="subcellular location">
    <subcellularLocation>
        <location evidence="3">Cytoplasm</location>
    </subcellularLocation>
</comment>
<comment type="similarity">
    <text evidence="4">Belongs to the eukaryotic ribosomal protein eS27 family.</text>
</comment>
<proteinExistence type="evidence at protein level"/>